<dbReference type="EC" id="2.7.7.6" evidence="1"/>
<dbReference type="EMBL" id="AE005176">
    <property type="protein sequence ID" value="AAK05897.1"/>
    <property type="status" value="ALT_INIT"/>
    <property type="molecule type" value="Genomic_DNA"/>
</dbReference>
<dbReference type="PIR" id="G86849">
    <property type="entry name" value="G86849"/>
</dbReference>
<dbReference type="RefSeq" id="NP_267956.1">
    <property type="nucleotide sequence ID" value="NC_002662.1"/>
</dbReference>
<dbReference type="RefSeq" id="WP_014570699.1">
    <property type="nucleotide sequence ID" value="NC_002662.1"/>
</dbReference>
<dbReference type="SMR" id="Q9CEN7"/>
<dbReference type="PaxDb" id="272623-L0138"/>
<dbReference type="EnsemblBacteria" id="AAK05897">
    <property type="protein sequence ID" value="AAK05897"/>
    <property type="gene ID" value="L0138"/>
</dbReference>
<dbReference type="KEGG" id="lla:L0138"/>
<dbReference type="PATRIC" id="fig|272623.7.peg.1926"/>
<dbReference type="eggNOG" id="COG0086">
    <property type="taxonomic scope" value="Bacteria"/>
</dbReference>
<dbReference type="HOGENOM" id="CLU_000524_3_1_9"/>
<dbReference type="OrthoDB" id="9815296at2"/>
<dbReference type="Proteomes" id="UP000002196">
    <property type="component" value="Chromosome"/>
</dbReference>
<dbReference type="GO" id="GO:0000428">
    <property type="term" value="C:DNA-directed RNA polymerase complex"/>
    <property type="evidence" value="ECO:0007669"/>
    <property type="project" value="UniProtKB-KW"/>
</dbReference>
<dbReference type="GO" id="GO:0003677">
    <property type="term" value="F:DNA binding"/>
    <property type="evidence" value="ECO:0007669"/>
    <property type="project" value="UniProtKB-UniRule"/>
</dbReference>
<dbReference type="GO" id="GO:0003899">
    <property type="term" value="F:DNA-directed RNA polymerase activity"/>
    <property type="evidence" value="ECO:0007669"/>
    <property type="project" value="UniProtKB-UniRule"/>
</dbReference>
<dbReference type="GO" id="GO:0000287">
    <property type="term" value="F:magnesium ion binding"/>
    <property type="evidence" value="ECO:0007669"/>
    <property type="project" value="UniProtKB-UniRule"/>
</dbReference>
<dbReference type="GO" id="GO:0008270">
    <property type="term" value="F:zinc ion binding"/>
    <property type="evidence" value="ECO:0007669"/>
    <property type="project" value="UniProtKB-UniRule"/>
</dbReference>
<dbReference type="GO" id="GO:0006351">
    <property type="term" value="P:DNA-templated transcription"/>
    <property type="evidence" value="ECO:0007669"/>
    <property type="project" value="UniProtKB-UniRule"/>
</dbReference>
<dbReference type="CDD" id="cd02655">
    <property type="entry name" value="RNAP_beta'_C"/>
    <property type="match status" value="1"/>
</dbReference>
<dbReference type="CDD" id="cd01609">
    <property type="entry name" value="RNAP_beta'_N"/>
    <property type="match status" value="1"/>
</dbReference>
<dbReference type="FunFam" id="1.10.150.390:FF:000002">
    <property type="entry name" value="DNA-directed RNA polymerase subunit beta"/>
    <property type="match status" value="1"/>
</dbReference>
<dbReference type="Gene3D" id="1.10.132.30">
    <property type="match status" value="1"/>
</dbReference>
<dbReference type="Gene3D" id="1.10.150.390">
    <property type="match status" value="1"/>
</dbReference>
<dbReference type="Gene3D" id="1.10.1790.20">
    <property type="match status" value="1"/>
</dbReference>
<dbReference type="Gene3D" id="1.10.40.90">
    <property type="match status" value="1"/>
</dbReference>
<dbReference type="Gene3D" id="2.40.40.20">
    <property type="match status" value="1"/>
</dbReference>
<dbReference type="Gene3D" id="2.40.50.100">
    <property type="match status" value="1"/>
</dbReference>
<dbReference type="Gene3D" id="4.10.860.120">
    <property type="entry name" value="RNA polymerase II, clamp domain"/>
    <property type="match status" value="1"/>
</dbReference>
<dbReference type="Gene3D" id="1.10.274.100">
    <property type="entry name" value="RNA polymerase Rpb1, domain 3"/>
    <property type="match status" value="1"/>
</dbReference>
<dbReference type="HAMAP" id="MF_01322">
    <property type="entry name" value="RNApol_bact_RpoC"/>
    <property type="match status" value="1"/>
</dbReference>
<dbReference type="InterPro" id="IPR045867">
    <property type="entry name" value="DNA-dir_RpoC_beta_prime"/>
</dbReference>
<dbReference type="InterPro" id="IPR012754">
    <property type="entry name" value="DNA-dir_RpoC_beta_prime_bact"/>
</dbReference>
<dbReference type="InterPro" id="IPR000722">
    <property type="entry name" value="RNA_pol_asu"/>
</dbReference>
<dbReference type="InterPro" id="IPR006592">
    <property type="entry name" value="RNA_pol_N"/>
</dbReference>
<dbReference type="InterPro" id="IPR007080">
    <property type="entry name" value="RNA_pol_Rpb1_1"/>
</dbReference>
<dbReference type="InterPro" id="IPR007066">
    <property type="entry name" value="RNA_pol_Rpb1_3"/>
</dbReference>
<dbReference type="InterPro" id="IPR042102">
    <property type="entry name" value="RNA_pol_Rpb1_3_sf"/>
</dbReference>
<dbReference type="InterPro" id="IPR007083">
    <property type="entry name" value="RNA_pol_Rpb1_4"/>
</dbReference>
<dbReference type="InterPro" id="IPR007081">
    <property type="entry name" value="RNA_pol_Rpb1_5"/>
</dbReference>
<dbReference type="InterPro" id="IPR044893">
    <property type="entry name" value="RNA_pol_Rpb1_clamp_domain"/>
</dbReference>
<dbReference type="InterPro" id="IPR038120">
    <property type="entry name" value="Rpb1_funnel_sf"/>
</dbReference>
<dbReference type="NCBIfam" id="TIGR02386">
    <property type="entry name" value="rpoC_TIGR"/>
    <property type="match status" value="1"/>
</dbReference>
<dbReference type="PANTHER" id="PTHR19376">
    <property type="entry name" value="DNA-DIRECTED RNA POLYMERASE"/>
    <property type="match status" value="1"/>
</dbReference>
<dbReference type="PANTHER" id="PTHR19376:SF54">
    <property type="entry name" value="DNA-DIRECTED RNA POLYMERASE SUBUNIT BETA"/>
    <property type="match status" value="1"/>
</dbReference>
<dbReference type="Pfam" id="PF04997">
    <property type="entry name" value="RNA_pol_Rpb1_1"/>
    <property type="match status" value="1"/>
</dbReference>
<dbReference type="Pfam" id="PF00623">
    <property type="entry name" value="RNA_pol_Rpb1_2"/>
    <property type="match status" value="1"/>
</dbReference>
<dbReference type="Pfam" id="PF04983">
    <property type="entry name" value="RNA_pol_Rpb1_3"/>
    <property type="match status" value="1"/>
</dbReference>
<dbReference type="Pfam" id="PF05000">
    <property type="entry name" value="RNA_pol_Rpb1_4"/>
    <property type="match status" value="1"/>
</dbReference>
<dbReference type="Pfam" id="PF04998">
    <property type="entry name" value="RNA_pol_Rpb1_5"/>
    <property type="match status" value="1"/>
</dbReference>
<dbReference type="SMART" id="SM00663">
    <property type="entry name" value="RPOLA_N"/>
    <property type="match status" value="1"/>
</dbReference>
<dbReference type="SUPFAM" id="SSF64484">
    <property type="entry name" value="beta and beta-prime subunits of DNA dependent RNA-polymerase"/>
    <property type="match status" value="1"/>
</dbReference>
<protein>
    <recommendedName>
        <fullName evidence="1">DNA-directed RNA polymerase subunit beta'</fullName>
        <shortName evidence="1">RNAP subunit beta'</shortName>
        <ecNumber evidence="1">2.7.7.6</ecNumber>
    </recommendedName>
    <alternativeName>
        <fullName evidence="1">RNA polymerase subunit beta'</fullName>
    </alternativeName>
    <alternativeName>
        <fullName evidence="1">Transcriptase subunit beta'</fullName>
    </alternativeName>
</protein>
<reference key="1">
    <citation type="journal article" date="2001" name="Genome Res.">
        <title>The complete genome sequence of the lactic acid bacterium Lactococcus lactis ssp. lactis IL1403.</title>
        <authorList>
            <person name="Bolotin A."/>
            <person name="Wincker P."/>
            <person name="Mauger S."/>
            <person name="Jaillon O."/>
            <person name="Malarme K."/>
            <person name="Weissenbach J."/>
            <person name="Ehrlich S.D."/>
            <person name="Sorokin A."/>
        </authorList>
    </citation>
    <scope>NUCLEOTIDE SEQUENCE [LARGE SCALE GENOMIC DNA]</scope>
    <source>
        <strain>IL1403</strain>
    </source>
</reference>
<accession>Q9CEN7</accession>
<name>RPOC_LACLA</name>
<proteinExistence type="inferred from homology"/>
<comment type="function">
    <text evidence="1">DNA-dependent RNA polymerase catalyzes the transcription of DNA into RNA using the four ribonucleoside triphosphates as substrates.</text>
</comment>
<comment type="catalytic activity">
    <reaction evidence="1">
        <text>RNA(n) + a ribonucleoside 5'-triphosphate = RNA(n+1) + diphosphate</text>
        <dbReference type="Rhea" id="RHEA:21248"/>
        <dbReference type="Rhea" id="RHEA-COMP:14527"/>
        <dbReference type="Rhea" id="RHEA-COMP:17342"/>
        <dbReference type="ChEBI" id="CHEBI:33019"/>
        <dbReference type="ChEBI" id="CHEBI:61557"/>
        <dbReference type="ChEBI" id="CHEBI:140395"/>
        <dbReference type="EC" id="2.7.7.6"/>
    </reaction>
</comment>
<comment type="cofactor">
    <cofactor evidence="1">
        <name>Mg(2+)</name>
        <dbReference type="ChEBI" id="CHEBI:18420"/>
    </cofactor>
    <text evidence="1">Binds 1 Mg(2+) ion per subunit.</text>
</comment>
<comment type="cofactor">
    <cofactor evidence="1">
        <name>Zn(2+)</name>
        <dbReference type="ChEBI" id="CHEBI:29105"/>
    </cofactor>
    <text evidence="1">Binds 2 Zn(2+) ions per subunit.</text>
</comment>
<comment type="subunit">
    <text evidence="1">The RNAP catalytic core consists of 2 alpha, 1 beta, 1 beta' and 1 omega subunit. When a sigma factor is associated with the core the holoenzyme is formed, which can initiate transcription.</text>
</comment>
<comment type="similarity">
    <text evidence="1">Belongs to the RNA polymerase beta' chain family.</text>
</comment>
<comment type="sequence caution" evidence="2">
    <conflict type="erroneous initiation">
        <sequence resource="EMBL-CDS" id="AAK05897"/>
    </conflict>
    <text>Truncated N-terminus.</text>
</comment>
<organism>
    <name type="scientific">Lactococcus lactis subsp. lactis (strain IL1403)</name>
    <name type="common">Streptococcus lactis</name>
    <dbReference type="NCBI Taxonomy" id="272623"/>
    <lineage>
        <taxon>Bacteria</taxon>
        <taxon>Bacillati</taxon>
        <taxon>Bacillota</taxon>
        <taxon>Bacilli</taxon>
        <taxon>Lactobacillales</taxon>
        <taxon>Streptococcaceae</taxon>
        <taxon>Lactococcus</taxon>
    </lineage>
</organism>
<keyword id="KW-0240">DNA-directed RNA polymerase</keyword>
<keyword id="KW-0460">Magnesium</keyword>
<keyword id="KW-0479">Metal-binding</keyword>
<keyword id="KW-0548">Nucleotidyltransferase</keyword>
<keyword id="KW-1185">Reference proteome</keyword>
<keyword id="KW-0804">Transcription</keyword>
<keyword id="KW-0808">Transferase</keyword>
<keyword id="KW-0862">Zinc</keyword>
<feature type="chain" id="PRO_0000067748" description="DNA-directed RNA polymerase subunit beta'">
    <location>
        <begin position="1"/>
        <end position="1207"/>
    </location>
</feature>
<feature type="binding site" evidence="1">
    <location>
        <position position="60"/>
    </location>
    <ligand>
        <name>Zn(2+)</name>
        <dbReference type="ChEBI" id="CHEBI:29105"/>
        <label>1</label>
    </ligand>
</feature>
<feature type="binding site" evidence="1">
    <location>
        <position position="62"/>
    </location>
    <ligand>
        <name>Zn(2+)</name>
        <dbReference type="ChEBI" id="CHEBI:29105"/>
        <label>1</label>
    </ligand>
</feature>
<feature type="binding site" evidence="1">
    <location>
        <position position="75"/>
    </location>
    <ligand>
        <name>Zn(2+)</name>
        <dbReference type="ChEBI" id="CHEBI:29105"/>
        <label>1</label>
    </ligand>
</feature>
<feature type="binding site" evidence="1">
    <location>
        <position position="78"/>
    </location>
    <ligand>
        <name>Zn(2+)</name>
        <dbReference type="ChEBI" id="CHEBI:29105"/>
        <label>1</label>
    </ligand>
</feature>
<feature type="binding site" evidence="1">
    <location>
        <position position="450"/>
    </location>
    <ligand>
        <name>Mg(2+)</name>
        <dbReference type="ChEBI" id="CHEBI:18420"/>
    </ligand>
</feature>
<feature type="binding site" evidence="1">
    <location>
        <position position="452"/>
    </location>
    <ligand>
        <name>Mg(2+)</name>
        <dbReference type="ChEBI" id="CHEBI:18420"/>
    </ligand>
</feature>
<feature type="binding site" evidence="1">
    <location>
        <position position="454"/>
    </location>
    <ligand>
        <name>Mg(2+)</name>
        <dbReference type="ChEBI" id="CHEBI:18420"/>
    </ligand>
</feature>
<feature type="binding site" evidence="1">
    <location>
        <position position="818"/>
    </location>
    <ligand>
        <name>Zn(2+)</name>
        <dbReference type="ChEBI" id="CHEBI:29105"/>
        <label>2</label>
    </ligand>
</feature>
<feature type="binding site" evidence="1">
    <location>
        <position position="892"/>
    </location>
    <ligand>
        <name>Zn(2+)</name>
        <dbReference type="ChEBI" id="CHEBI:29105"/>
        <label>2</label>
    </ligand>
</feature>
<feature type="binding site" evidence="1">
    <location>
        <position position="899"/>
    </location>
    <ligand>
        <name>Zn(2+)</name>
        <dbReference type="ChEBI" id="CHEBI:29105"/>
        <label>2</label>
    </ligand>
</feature>
<feature type="binding site" evidence="1">
    <location>
        <position position="902"/>
    </location>
    <ligand>
        <name>Zn(2+)</name>
        <dbReference type="ChEBI" id="CHEBI:29105"/>
        <label>2</label>
    </ligand>
</feature>
<evidence type="ECO:0000255" key="1">
    <source>
        <dbReference type="HAMAP-Rule" id="MF_01322"/>
    </source>
</evidence>
<evidence type="ECO:0000305" key="2"/>
<gene>
    <name evidence="1" type="primary">rpoC</name>
    <name type="ordered locus">LL1799</name>
    <name type="ORF">L0138</name>
</gene>
<sequence>MVDVNKFESMRIGIASPQKIRYWSFGEVKKPETINYRTQKPEREGLFDERIFGPQKDWECACGKLKGVFYKNQVCELCGVQVTTAKSRRERMGHIELAAPISHIWYFKGIPSRMGLALDMSPRALEEVIYFASYVVIDPKETDLEKKQLLTEREYREQLLKNGFGSFVAKMGAEAIQDLLNDVDIDKEVSELKEELKTVTGQRRVKIIRRLDVLSAFRKSGNALSWMVLNVLPVIPPDLRPMVQLDGGRFATSDLNDLYRRVINRNNRLKRLMELNAPNIIVQNEKRMLQEAVDTLIDNGRRGRPITGAGNRPLKSLSHMLKGKQGRFRQNLLGKRVDYSGRSVIAVGPTLKMYQCGVPREMAIELFKPFVMAQLVKKELAANIRAAKRKVERQDSDVWDVLETVVKEHPVLLNRAPTLHRLGIQAFEPVLIDGKAIRLHPLACEAYNADFDGDQMAIHLPLSEEAQAEARLLMLAAEHILNPKDGKPVVTPSQDMVLGNYYLTMEEKGREGEGMIFATPEEVEIAMRNGYVHLHTRIGIATKSLNKPWTENQKDKILVTTVGKVIFNSIIPEGMPYLNEPTDVNLTTSTDDRFFMDAGQDIKEVLAGIDTVRPFKKGYLGNIIAEVFKRYRTTATSEYLDRLKNLGYHQSTLAGLTVGIADIPVVEDKHKIIDAAHKRVEQITKQFRRGLITDDERYNAVTGVWRDAKEALEKRLIDEQDLTNPIVMMMDSGARGNISNFSQLAGMRGLMAAPNGKIMELPIISNFREGLSVLEMFFSTHGARKGMTDTALKTADSGYLTRRLVDVAQDVIIREDDCGTDRGLVISDIATGKEMVEPLFERLVGRYTRKSVLHPETGEMIIADDTLISEDVARKIIDAGVKEVTIRSVFTCKTPHGVCKHCYGINLATGDAVEVGEAVGTIAAQSIGEPGTQLTMRTFHTGGVASSSDITQGLPRVQEIFEARNPKGEAIITEVTGTVESIVEDPATRTREITVKGKTDTRSYTVGMADVLMVEEGEFIHRGAPLIQGSIEPKHLLQVRDALSVETYLLGEVQKTYRSQGVEIGDKHIEVMVRQMLRKVRVMDNGSTDILPGTLMDISDFEALNETALLNGEMPATGRPVLMGITKASLETNSFLSAASFQETTRVLTDAAIRGKEDHLLGLKENVIIGKIIPAGTGMFRYRNIEPLADLTNAPEVEEVETETVEN</sequence>